<gene>
    <name type="primary">mmpS4</name>
    <name type="ordered locus">MT0467</name>
</gene>
<accession>P9WJS8</accession>
<accession>L0T6P9</accession>
<accession>O53736</accession>
<accession>P0A5K2</accession>
<protein>
    <recommendedName>
        <fullName evidence="1">Siderophore export accessory protein MmpS4</fullName>
    </recommendedName>
    <alternativeName>
        <fullName>PGB14T-X</fullName>
    </alternativeName>
</protein>
<organism>
    <name type="scientific">Mycobacterium tuberculosis (strain CDC 1551 / Oshkosh)</name>
    <dbReference type="NCBI Taxonomy" id="83331"/>
    <lineage>
        <taxon>Bacteria</taxon>
        <taxon>Bacillati</taxon>
        <taxon>Actinomycetota</taxon>
        <taxon>Actinomycetes</taxon>
        <taxon>Mycobacteriales</taxon>
        <taxon>Mycobacteriaceae</taxon>
        <taxon>Mycobacterium</taxon>
        <taxon>Mycobacterium tuberculosis complex</taxon>
    </lineage>
</organism>
<keyword id="KW-0997">Cell inner membrane</keyword>
<keyword id="KW-1003">Cell membrane</keyword>
<keyword id="KW-0472">Membrane</keyword>
<keyword id="KW-1185">Reference proteome</keyword>
<keyword id="KW-0812">Transmembrane</keyword>
<keyword id="KW-1133">Transmembrane helix</keyword>
<name>MMPS4_MYCTO</name>
<comment type="function">
    <text evidence="1">Part of an export system, which is required for biosynthesis and secretion of siderophores.</text>
</comment>
<comment type="subunit">
    <text evidence="1">Interacts with MmpL4.</text>
</comment>
<comment type="subcellular location">
    <subcellularLocation>
        <location evidence="1">Cell inner membrane</location>
        <topology evidence="2">Single-pass membrane protein</topology>
    </subcellularLocation>
</comment>
<comment type="similarity">
    <text evidence="3">Belongs to the MmpS family.</text>
</comment>
<dbReference type="EMBL" id="AE000516">
    <property type="protein sequence ID" value="AAK44690.1"/>
    <property type="molecule type" value="Genomic_DNA"/>
</dbReference>
<dbReference type="PIR" id="D70831">
    <property type="entry name" value="D70831"/>
</dbReference>
<dbReference type="RefSeq" id="WP_003402272.1">
    <property type="nucleotide sequence ID" value="NZ_KK341227.1"/>
</dbReference>
<dbReference type="BMRB" id="P9WJS8"/>
<dbReference type="SMR" id="P9WJS8"/>
<dbReference type="GeneID" id="45424412"/>
<dbReference type="KEGG" id="mtc:MT0467"/>
<dbReference type="PATRIC" id="fig|83331.31.peg.494"/>
<dbReference type="HOGENOM" id="CLU_119497_0_0_11"/>
<dbReference type="Proteomes" id="UP000001020">
    <property type="component" value="Chromosome"/>
</dbReference>
<dbReference type="GO" id="GO:0005886">
    <property type="term" value="C:plasma membrane"/>
    <property type="evidence" value="ECO:0007669"/>
    <property type="project" value="UniProtKB-SubCell"/>
</dbReference>
<dbReference type="Gene3D" id="2.60.40.2880">
    <property type="entry name" value="MmpS1-5, C-terminal soluble domain"/>
    <property type="match status" value="1"/>
</dbReference>
<dbReference type="InterPro" id="IPR008693">
    <property type="entry name" value="MmpS"/>
</dbReference>
<dbReference type="InterPro" id="IPR038468">
    <property type="entry name" value="MmpS_C"/>
</dbReference>
<dbReference type="Pfam" id="PF05423">
    <property type="entry name" value="Mycobact_memb"/>
    <property type="match status" value="1"/>
</dbReference>
<reference key="1">
    <citation type="journal article" date="2002" name="J. Bacteriol.">
        <title>Whole-genome comparison of Mycobacterium tuberculosis clinical and laboratory strains.</title>
        <authorList>
            <person name="Fleischmann R.D."/>
            <person name="Alland D."/>
            <person name="Eisen J.A."/>
            <person name="Carpenter L."/>
            <person name="White O."/>
            <person name="Peterson J.D."/>
            <person name="DeBoy R.T."/>
            <person name="Dodson R.J."/>
            <person name="Gwinn M.L."/>
            <person name="Haft D.H."/>
            <person name="Hickey E.K."/>
            <person name="Kolonay J.F."/>
            <person name="Nelson W.C."/>
            <person name="Umayam L.A."/>
            <person name="Ermolaeva M.D."/>
            <person name="Salzberg S.L."/>
            <person name="Delcher A."/>
            <person name="Utterback T.R."/>
            <person name="Weidman J.F."/>
            <person name="Khouri H.M."/>
            <person name="Gill J."/>
            <person name="Mikula A."/>
            <person name="Bishai W."/>
            <person name="Jacobs W.R. Jr."/>
            <person name="Venter J.C."/>
            <person name="Fraser C.M."/>
        </authorList>
    </citation>
    <scope>NUCLEOTIDE SEQUENCE [LARGE SCALE GENOMIC DNA]</scope>
    <source>
        <strain>CDC 1551 / Oshkosh</strain>
    </source>
</reference>
<feature type="chain" id="PRO_0000427777" description="Siderophore export accessory protein MmpS4">
    <location>
        <begin position="1"/>
        <end position="140"/>
    </location>
</feature>
<feature type="transmembrane region" description="Helical" evidence="2">
    <location>
        <begin position="2"/>
        <end position="22"/>
    </location>
</feature>
<proteinExistence type="inferred from homology"/>
<sequence>MLMRTWIPLVILVVVIVGGFTVHRIRGFFGSENRPSYSDTNLENSKPFNPKHLTYEIFGPPGTVADISYFDVNSEPQRVDGAVLPWSLHITTNDAAVMGNIVAQGNSDSIGCRITVDGKVRAERVSNEVNAYTYCLVKSA</sequence>
<evidence type="ECO:0000250" key="1">
    <source>
        <dbReference type="UniProtKB" id="P9WJS9"/>
    </source>
</evidence>
<evidence type="ECO:0000255" key="2"/>
<evidence type="ECO:0000305" key="3"/>